<comment type="function">
    <text evidence="1">Associates with the EF-Tu.GDP complex and induces the exchange of GDP to GTP. It remains bound to the aminoacyl-tRNA.EF-Tu.GTP complex up to the GTP hydrolysis stage on the ribosome.</text>
</comment>
<comment type="subcellular location">
    <subcellularLocation>
        <location evidence="1">Cytoplasm</location>
    </subcellularLocation>
</comment>
<comment type="similarity">
    <text evidence="1">Belongs to the EF-Ts family.</text>
</comment>
<name>EFTS_MYCAP</name>
<organism>
    <name type="scientific">Mycoplasmopsis agalactiae (strain NCTC 10123 / CIP 59.7 / PG2)</name>
    <name type="common">Mycoplasma agalactiae</name>
    <dbReference type="NCBI Taxonomy" id="347257"/>
    <lineage>
        <taxon>Bacteria</taxon>
        <taxon>Bacillati</taxon>
        <taxon>Mycoplasmatota</taxon>
        <taxon>Mycoplasmoidales</taxon>
        <taxon>Metamycoplasmataceae</taxon>
        <taxon>Mycoplasmopsis</taxon>
    </lineage>
</organism>
<dbReference type="EMBL" id="CU179680">
    <property type="protein sequence ID" value="CAL58958.1"/>
    <property type="molecule type" value="Genomic_DNA"/>
</dbReference>
<dbReference type="RefSeq" id="WP_011949436.1">
    <property type="nucleotide sequence ID" value="NC_009497.1"/>
</dbReference>
<dbReference type="SMR" id="A5IY49"/>
<dbReference type="STRING" id="347257.MAG2600"/>
<dbReference type="GeneID" id="93358023"/>
<dbReference type="KEGG" id="maa:MAG2600"/>
<dbReference type="HOGENOM" id="CLU_047155_0_2_14"/>
<dbReference type="Proteomes" id="UP000007065">
    <property type="component" value="Chromosome"/>
</dbReference>
<dbReference type="GO" id="GO:0005737">
    <property type="term" value="C:cytoplasm"/>
    <property type="evidence" value="ECO:0007669"/>
    <property type="project" value="UniProtKB-SubCell"/>
</dbReference>
<dbReference type="GO" id="GO:0003746">
    <property type="term" value="F:translation elongation factor activity"/>
    <property type="evidence" value="ECO:0007669"/>
    <property type="project" value="UniProtKB-UniRule"/>
</dbReference>
<dbReference type="CDD" id="cd14275">
    <property type="entry name" value="UBA_EF-Ts"/>
    <property type="match status" value="1"/>
</dbReference>
<dbReference type="FunFam" id="1.10.8.10:FF:000001">
    <property type="entry name" value="Elongation factor Ts"/>
    <property type="match status" value="1"/>
</dbReference>
<dbReference type="Gene3D" id="1.10.286.20">
    <property type="match status" value="1"/>
</dbReference>
<dbReference type="Gene3D" id="1.10.8.10">
    <property type="entry name" value="DNA helicase RuvA subunit, C-terminal domain"/>
    <property type="match status" value="1"/>
</dbReference>
<dbReference type="Gene3D" id="3.30.479.20">
    <property type="entry name" value="Elongation factor Ts, dimerisation domain"/>
    <property type="match status" value="2"/>
</dbReference>
<dbReference type="HAMAP" id="MF_00050">
    <property type="entry name" value="EF_Ts"/>
    <property type="match status" value="1"/>
</dbReference>
<dbReference type="InterPro" id="IPR036402">
    <property type="entry name" value="EF-Ts_dimer_sf"/>
</dbReference>
<dbReference type="InterPro" id="IPR001816">
    <property type="entry name" value="Transl_elong_EFTs/EF1B"/>
</dbReference>
<dbReference type="InterPro" id="IPR014039">
    <property type="entry name" value="Transl_elong_EFTs/EF1B_dimer"/>
</dbReference>
<dbReference type="InterPro" id="IPR009060">
    <property type="entry name" value="UBA-like_sf"/>
</dbReference>
<dbReference type="NCBIfam" id="TIGR00116">
    <property type="entry name" value="tsf"/>
    <property type="match status" value="1"/>
</dbReference>
<dbReference type="PANTHER" id="PTHR11741">
    <property type="entry name" value="ELONGATION FACTOR TS"/>
    <property type="match status" value="1"/>
</dbReference>
<dbReference type="PANTHER" id="PTHR11741:SF0">
    <property type="entry name" value="ELONGATION FACTOR TS, MITOCHONDRIAL"/>
    <property type="match status" value="1"/>
</dbReference>
<dbReference type="Pfam" id="PF00889">
    <property type="entry name" value="EF_TS"/>
    <property type="match status" value="1"/>
</dbReference>
<dbReference type="SUPFAM" id="SSF54713">
    <property type="entry name" value="Elongation factor Ts (EF-Ts), dimerisation domain"/>
    <property type="match status" value="2"/>
</dbReference>
<dbReference type="SUPFAM" id="SSF46934">
    <property type="entry name" value="UBA-like"/>
    <property type="match status" value="1"/>
</dbReference>
<reference key="1">
    <citation type="journal article" date="2007" name="PLoS Genet.">
        <title>Being pathogenic, plastic, and sexual while living with a nearly minimal bacterial genome.</title>
        <authorList>
            <person name="Sirand-Pugnet P."/>
            <person name="Lartigue C."/>
            <person name="Marenda M."/>
            <person name="Jacob D."/>
            <person name="Barre A."/>
            <person name="Barbe V."/>
            <person name="Schenowitz C."/>
            <person name="Mangenot S."/>
            <person name="Couloux A."/>
            <person name="Segurens B."/>
            <person name="de Daruvar A."/>
            <person name="Blanchard A."/>
            <person name="Citti C."/>
        </authorList>
    </citation>
    <scope>NUCLEOTIDE SEQUENCE [LARGE SCALE GENOMIC DNA]</scope>
    <source>
        <strain>NCTC 10123 / CIP 59.7 / PG2</strain>
    </source>
</reference>
<gene>
    <name evidence="1" type="primary">tsf</name>
    <name type="ordered locus">MAG2600</name>
</gene>
<evidence type="ECO:0000255" key="1">
    <source>
        <dbReference type="HAMAP-Rule" id="MF_00050"/>
    </source>
</evidence>
<sequence>MDKMALIKELRERTAAGMSDCKKALEVSNWDVEEAISFLKKNGKIKAASKANRISADGLLVEAGNNERAVLVELNCETDFVAHGEEFVALANTVAQTIVANFELVKENGAEAALALKLANSEEILADAISSYSAKCGEKIELRRFVLIDAGTNQSVSTFVHINGKIGAIMLTEGSDAEAARNVAMHLSAMNPEYIFAEDIPGSVLEKFASEFKEPAGFSDKPEKIQETIRKGFVDKKISEVTLLSQKLIMDESKTVQQYLKELKLRLIKAIRFGLGEGIEKKETDFAAEVAEQMSKSM</sequence>
<proteinExistence type="inferred from homology"/>
<keyword id="KW-0963">Cytoplasm</keyword>
<keyword id="KW-0251">Elongation factor</keyword>
<keyword id="KW-0648">Protein biosynthesis</keyword>
<keyword id="KW-1185">Reference proteome</keyword>
<feature type="chain" id="PRO_1000116763" description="Elongation factor Ts">
    <location>
        <begin position="1"/>
        <end position="298"/>
    </location>
</feature>
<feature type="region of interest" description="Involved in Mg(2+) ion dislocation from EF-Tu" evidence="1">
    <location>
        <begin position="78"/>
        <end position="81"/>
    </location>
</feature>
<accession>A5IY49</accession>
<protein>
    <recommendedName>
        <fullName evidence="1">Elongation factor Ts</fullName>
        <shortName evidence="1">EF-Ts</shortName>
    </recommendedName>
</protein>